<proteinExistence type="inferred from homology"/>
<keyword id="KW-0963">Cytoplasm</keyword>
<keyword id="KW-0690">Ribosome biogenesis</keyword>
<feature type="chain" id="PRO_1000088861" description="Ribosome-binding factor A">
    <location>
        <begin position="1"/>
        <end position="150"/>
    </location>
</feature>
<feature type="region of interest" description="Disordered" evidence="2">
    <location>
        <begin position="126"/>
        <end position="150"/>
    </location>
</feature>
<evidence type="ECO:0000255" key="1">
    <source>
        <dbReference type="HAMAP-Rule" id="MF_00003"/>
    </source>
</evidence>
<evidence type="ECO:0000256" key="2">
    <source>
        <dbReference type="SAM" id="MobiDB-lite"/>
    </source>
</evidence>
<gene>
    <name evidence="1" type="primary">rbfA</name>
    <name type="ordered locus">BAbS19_I20270</name>
</gene>
<reference key="1">
    <citation type="journal article" date="2008" name="PLoS ONE">
        <title>Genome sequence of Brucella abortus vaccine strain S19 compared to virulent strains yields candidate virulence genes.</title>
        <authorList>
            <person name="Crasta O.R."/>
            <person name="Folkerts O."/>
            <person name="Fei Z."/>
            <person name="Mane S.P."/>
            <person name="Evans C."/>
            <person name="Martino-Catt S."/>
            <person name="Bricker B."/>
            <person name="Yu G."/>
            <person name="Du L."/>
            <person name="Sobral B.W."/>
        </authorList>
    </citation>
    <scope>NUCLEOTIDE SEQUENCE [LARGE SCALE GENOMIC DNA]</scope>
    <source>
        <strain>S19</strain>
    </source>
</reference>
<accession>B2S9F7</accession>
<comment type="function">
    <text evidence="1">One of several proteins that assist in the late maturation steps of the functional core of the 30S ribosomal subunit. Associates with free 30S ribosomal subunits (but not with 30S subunits that are part of 70S ribosomes or polysomes). Required for efficient processing of 16S rRNA. May interact with the 5'-terminal helix region of 16S rRNA.</text>
</comment>
<comment type="subunit">
    <text evidence="1">Monomer. Binds 30S ribosomal subunits, but not 50S ribosomal subunits or 70S ribosomes.</text>
</comment>
<comment type="subcellular location">
    <subcellularLocation>
        <location evidence="1">Cytoplasm</location>
    </subcellularLocation>
</comment>
<comment type="similarity">
    <text evidence="1">Belongs to the RbfA family.</text>
</comment>
<organism>
    <name type="scientific">Brucella abortus (strain S19)</name>
    <dbReference type="NCBI Taxonomy" id="430066"/>
    <lineage>
        <taxon>Bacteria</taxon>
        <taxon>Pseudomonadati</taxon>
        <taxon>Pseudomonadota</taxon>
        <taxon>Alphaproteobacteria</taxon>
        <taxon>Hyphomicrobiales</taxon>
        <taxon>Brucellaceae</taxon>
        <taxon>Brucella/Ochrobactrum group</taxon>
        <taxon>Brucella</taxon>
    </lineage>
</organism>
<sequence length="150" mass="16573">MARSHDTKGSGGLSQRQLRVGEQVRHALAQVLQRGEIRDDLIERTVISVSEVRMSPDLKIATCFITPLGSADPQAVIKALASHAKFIRGRVAPSLAQMKYMPEFRFRPDTSFDNFSKIDALLRSPEVARDLSHDDDEDGGADEAPRNGDE</sequence>
<name>RBFA_BRUA1</name>
<dbReference type="EMBL" id="CP000887">
    <property type="protein sequence ID" value="ACD73509.1"/>
    <property type="molecule type" value="Genomic_DNA"/>
</dbReference>
<dbReference type="RefSeq" id="WP_002965228.1">
    <property type="nucleotide sequence ID" value="NC_010742.1"/>
</dbReference>
<dbReference type="SMR" id="B2S9F7"/>
<dbReference type="GeneID" id="97534581"/>
<dbReference type="KEGG" id="bmc:BAbS19_I20270"/>
<dbReference type="HOGENOM" id="CLU_089475_1_0_5"/>
<dbReference type="Proteomes" id="UP000002565">
    <property type="component" value="Chromosome 1"/>
</dbReference>
<dbReference type="GO" id="GO:0005829">
    <property type="term" value="C:cytosol"/>
    <property type="evidence" value="ECO:0007669"/>
    <property type="project" value="TreeGrafter"/>
</dbReference>
<dbReference type="GO" id="GO:0043024">
    <property type="term" value="F:ribosomal small subunit binding"/>
    <property type="evidence" value="ECO:0007669"/>
    <property type="project" value="TreeGrafter"/>
</dbReference>
<dbReference type="GO" id="GO:0030490">
    <property type="term" value="P:maturation of SSU-rRNA"/>
    <property type="evidence" value="ECO:0007669"/>
    <property type="project" value="UniProtKB-UniRule"/>
</dbReference>
<dbReference type="Gene3D" id="3.30.300.20">
    <property type="match status" value="1"/>
</dbReference>
<dbReference type="HAMAP" id="MF_00003">
    <property type="entry name" value="RbfA"/>
    <property type="match status" value="1"/>
</dbReference>
<dbReference type="InterPro" id="IPR015946">
    <property type="entry name" value="KH_dom-like_a/b"/>
</dbReference>
<dbReference type="InterPro" id="IPR000238">
    <property type="entry name" value="RbfA"/>
</dbReference>
<dbReference type="InterPro" id="IPR023799">
    <property type="entry name" value="RbfA_dom_sf"/>
</dbReference>
<dbReference type="InterPro" id="IPR020053">
    <property type="entry name" value="Ribosome-bd_factorA_CS"/>
</dbReference>
<dbReference type="NCBIfam" id="NF001802">
    <property type="entry name" value="PRK00521.2-5"/>
    <property type="match status" value="1"/>
</dbReference>
<dbReference type="NCBIfam" id="TIGR00082">
    <property type="entry name" value="rbfA"/>
    <property type="match status" value="1"/>
</dbReference>
<dbReference type="PANTHER" id="PTHR33515">
    <property type="entry name" value="RIBOSOME-BINDING FACTOR A, CHLOROPLASTIC-RELATED"/>
    <property type="match status" value="1"/>
</dbReference>
<dbReference type="PANTHER" id="PTHR33515:SF1">
    <property type="entry name" value="RIBOSOME-BINDING FACTOR A, CHLOROPLASTIC-RELATED"/>
    <property type="match status" value="1"/>
</dbReference>
<dbReference type="Pfam" id="PF02033">
    <property type="entry name" value="RBFA"/>
    <property type="match status" value="1"/>
</dbReference>
<dbReference type="SUPFAM" id="SSF89919">
    <property type="entry name" value="Ribosome-binding factor A, RbfA"/>
    <property type="match status" value="1"/>
</dbReference>
<dbReference type="PROSITE" id="PS01319">
    <property type="entry name" value="RBFA"/>
    <property type="match status" value="1"/>
</dbReference>
<protein>
    <recommendedName>
        <fullName evidence="1">Ribosome-binding factor A</fullName>
    </recommendedName>
</protein>